<organism>
    <name type="scientific">Acinetobacter baumannii (strain AB0057)</name>
    <dbReference type="NCBI Taxonomy" id="480119"/>
    <lineage>
        <taxon>Bacteria</taxon>
        <taxon>Pseudomonadati</taxon>
        <taxon>Pseudomonadota</taxon>
        <taxon>Gammaproteobacteria</taxon>
        <taxon>Moraxellales</taxon>
        <taxon>Moraxellaceae</taxon>
        <taxon>Acinetobacter</taxon>
        <taxon>Acinetobacter calcoaceticus/baumannii complex</taxon>
    </lineage>
</organism>
<comment type="function">
    <text evidence="1">Ring cyclization and eight-electron oxidation of 3a-(2-amino-2-carboxyethyl)-4,5-dioxo-4,5,6,7,8,9-hexahydroquinoline-7,9-dicarboxylic-acid to PQQ.</text>
</comment>
<comment type="catalytic activity">
    <reaction evidence="1">
        <text>6-(2-amino-2-carboxyethyl)-7,8-dioxo-1,2,3,4,7,8-hexahydroquinoline-2,4-dicarboxylate + 3 O2 = pyrroloquinoline quinone + 2 H2O2 + 2 H2O + H(+)</text>
        <dbReference type="Rhea" id="RHEA:10692"/>
        <dbReference type="ChEBI" id="CHEBI:15377"/>
        <dbReference type="ChEBI" id="CHEBI:15378"/>
        <dbReference type="ChEBI" id="CHEBI:15379"/>
        <dbReference type="ChEBI" id="CHEBI:16240"/>
        <dbReference type="ChEBI" id="CHEBI:58442"/>
        <dbReference type="ChEBI" id="CHEBI:58778"/>
        <dbReference type="EC" id="1.3.3.11"/>
    </reaction>
</comment>
<comment type="pathway">
    <text evidence="1">Cofactor biosynthesis; pyrroloquinoline quinone biosynthesis.</text>
</comment>
<comment type="similarity">
    <text evidence="1">Belongs to the PqqC family.</text>
</comment>
<reference key="1">
    <citation type="journal article" date="2008" name="J. Bacteriol.">
        <title>Comparative genome sequence analysis of multidrug-resistant Acinetobacter baumannii.</title>
        <authorList>
            <person name="Adams M.D."/>
            <person name="Goglin K."/>
            <person name="Molyneaux N."/>
            <person name="Hujer K.M."/>
            <person name="Lavender H."/>
            <person name="Jamison J.J."/>
            <person name="MacDonald I.J."/>
            <person name="Martin K.M."/>
            <person name="Russo T."/>
            <person name="Campagnari A.A."/>
            <person name="Hujer A.M."/>
            <person name="Bonomo R.A."/>
            <person name="Gill S.R."/>
        </authorList>
    </citation>
    <scope>NUCLEOTIDE SEQUENCE [LARGE SCALE GENOMIC DNA]</scope>
    <source>
        <strain>AB0057</strain>
    </source>
</reference>
<feature type="chain" id="PRO_1000131172" description="Pyrroloquinoline-quinone synthase">
    <location>
        <begin position="1"/>
        <end position="252"/>
    </location>
</feature>
<accession>B7I6M6</accession>
<sequence length="252" mass="29665">MTQTPEALTTEQFKQAIIDKGQYYHIYHPFHVMMYEGKATQQQIQAWVANRYYYQINIPLKDAAIMANCPDQRVRQEWIQRMIDQDGEYPDGGGREAWLRLAEAVGLSREQVISEELVLPGVRFAVDAYVNFARRASWREAASSSLTELFAPQIHQSRLESWPQHYPWIDDKGYEYFRSRLSQARRDVEHGLTITLDSFTTHEQQQRMLEILQFKLDILWSILDALTLAYVHNEAPYHSVTQERVWHKGLFK</sequence>
<proteinExistence type="inferred from homology"/>
<gene>
    <name evidence="1" type="primary">pqqC</name>
    <name type="ordered locus">AB57_1990</name>
</gene>
<evidence type="ECO:0000255" key="1">
    <source>
        <dbReference type="HAMAP-Rule" id="MF_00654"/>
    </source>
</evidence>
<keyword id="KW-0560">Oxidoreductase</keyword>
<keyword id="KW-0884">PQQ biosynthesis</keyword>
<dbReference type="EC" id="1.3.3.11" evidence="1"/>
<dbReference type="EMBL" id="CP001182">
    <property type="protein sequence ID" value="ACJ41363.1"/>
    <property type="molecule type" value="Genomic_DNA"/>
</dbReference>
<dbReference type="RefSeq" id="WP_000195110.1">
    <property type="nucleotide sequence ID" value="NC_011586.2"/>
</dbReference>
<dbReference type="SMR" id="B7I6M6"/>
<dbReference type="GeneID" id="92893973"/>
<dbReference type="KEGG" id="abn:AB57_1990"/>
<dbReference type="HOGENOM" id="CLU_080136_0_0_6"/>
<dbReference type="UniPathway" id="UPA00539"/>
<dbReference type="Proteomes" id="UP000007094">
    <property type="component" value="Chromosome"/>
</dbReference>
<dbReference type="GO" id="GO:0033732">
    <property type="term" value="F:pyrroloquinoline-quinone synthase activity"/>
    <property type="evidence" value="ECO:0007669"/>
    <property type="project" value="UniProtKB-EC"/>
</dbReference>
<dbReference type="GO" id="GO:0018189">
    <property type="term" value="P:pyrroloquinoline quinone biosynthetic process"/>
    <property type="evidence" value="ECO:0007669"/>
    <property type="project" value="UniProtKB-UniRule"/>
</dbReference>
<dbReference type="GO" id="GO:0006790">
    <property type="term" value="P:sulfur compound metabolic process"/>
    <property type="evidence" value="ECO:0007669"/>
    <property type="project" value="UniProtKB-ARBA"/>
</dbReference>
<dbReference type="Gene3D" id="1.20.910.10">
    <property type="entry name" value="Heme oxygenase-like"/>
    <property type="match status" value="1"/>
</dbReference>
<dbReference type="HAMAP" id="MF_00654">
    <property type="entry name" value="PQQ_syn_PqqC"/>
    <property type="match status" value="1"/>
</dbReference>
<dbReference type="InterPro" id="IPR016084">
    <property type="entry name" value="Haem_Oase-like_multi-hlx"/>
</dbReference>
<dbReference type="InterPro" id="IPR011845">
    <property type="entry name" value="PqqC"/>
</dbReference>
<dbReference type="InterPro" id="IPR039068">
    <property type="entry name" value="PqqC-like"/>
</dbReference>
<dbReference type="InterPro" id="IPR004305">
    <property type="entry name" value="Thiaminase-2/PQQC"/>
</dbReference>
<dbReference type="NCBIfam" id="TIGR02111">
    <property type="entry name" value="PQQ_syn_pqqC"/>
    <property type="match status" value="1"/>
</dbReference>
<dbReference type="PANTHER" id="PTHR40279:SF3">
    <property type="entry name" value="4-AMINOBENZOATE SYNTHASE"/>
    <property type="match status" value="1"/>
</dbReference>
<dbReference type="PANTHER" id="PTHR40279">
    <property type="entry name" value="PQQC-LIKE PROTEIN"/>
    <property type="match status" value="1"/>
</dbReference>
<dbReference type="Pfam" id="PF03070">
    <property type="entry name" value="TENA_THI-4"/>
    <property type="match status" value="1"/>
</dbReference>
<dbReference type="SUPFAM" id="SSF48613">
    <property type="entry name" value="Heme oxygenase-like"/>
    <property type="match status" value="1"/>
</dbReference>
<name>PQQC_ACIB5</name>
<protein>
    <recommendedName>
        <fullName evidence="1">Pyrroloquinoline-quinone synthase</fullName>
        <ecNumber evidence="1">1.3.3.11</ecNumber>
    </recommendedName>
    <alternativeName>
        <fullName evidence="1">Coenzyme PQQ synthesis protein C</fullName>
    </alternativeName>
    <alternativeName>
        <fullName evidence="1">Pyrroloquinoline quinone biosynthesis protein C</fullName>
    </alternativeName>
</protein>